<accession>P75115</accession>
<name>Y677_MYCPN</name>
<reference key="1">
    <citation type="journal article" date="1996" name="Nucleic Acids Res.">
        <title>Complete sequence analysis of the genome of the bacterium Mycoplasma pneumoniae.</title>
        <authorList>
            <person name="Himmelreich R."/>
            <person name="Hilbert H."/>
            <person name="Plagens H."/>
            <person name="Pirkl E."/>
            <person name="Li B.-C."/>
            <person name="Herrmann R."/>
        </authorList>
    </citation>
    <scope>NUCLEOTIDE SEQUENCE [LARGE SCALE GENOMIC DNA]</scope>
    <source>
        <strain>ATCC 29342 / M129 / Subtype 1</strain>
    </source>
</reference>
<feature type="chain" id="PRO_0000210630" description="Uncharacterized protein MG461 homolog">
    <location>
        <begin position="1"/>
        <end position="425"/>
    </location>
</feature>
<feature type="domain" description="HD" evidence="1">
    <location>
        <begin position="55"/>
        <end position="181"/>
    </location>
</feature>
<evidence type="ECO:0000255" key="1">
    <source>
        <dbReference type="PROSITE-ProRule" id="PRU01175"/>
    </source>
</evidence>
<gene>
    <name type="ordered locus">MPN_677</name>
    <name type="ORF">K05_orf425</name>
    <name type="ORF">MP165</name>
</gene>
<dbReference type="EMBL" id="U00089">
    <property type="protein sequence ID" value="AAB95813.1"/>
    <property type="molecule type" value="Genomic_DNA"/>
</dbReference>
<dbReference type="PIR" id="S73491">
    <property type="entry name" value="S73491"/>
</dbReference>
<dbReference type="RefSeq" id="NP_110366.1">
    <property type="nucleotide sequence ID" value="NC_000912.1"/>
</dbReference>
<dbReference type="RefSeq" id="WP_010875034.1">
    <property type="nucleotide sequence ID" value="NZ_OU342337.1"/>
</dbReference>
<dbReference type="SMR" id="P75115"/>
<dbReference type="IntAct" id="P75115">
    <property type="interactions" value="2"/>
</dbReference>
<dbReference type="STRING" id="272634.MPN_677"/>
<dbReference type="EnsemblBacteria" id="AAB95813">
    <property type="protein sequence ID" value="AAB95813"/>
    <property type="gene ID" value="MPN_677"/>
</dbReference>
<dbReference type="KEGG" id="mpn:MPN_677"/>
<dbReference type="PATRIC" id="fig|272634.6.peg.744"/>
<dbReference type="HOGENOM" id="CLU_026821_0_0_14"/>
<dbReference type="OrthoDB" id="9803619at2"/>
<dbReference type="BioCyc" id="MPNE272634:G1GJ3-1085-MONOMER"/>
<dbReference type="Proteomes" id="UP000000808">
    <property type="component" value="Chromosome"/>
</dbReference>
<dbReference type="GO" id="GO:0008832">
    <property type="term" value="F:dGTPase activity"/>
    <property type="evidence" value="ECO:0007669"/>
    <property type="project" value="TreeGrafter"/>
</dbReference>
<dbReference type="GO" id="GO:0006203">
    <property type="term" value="P:dGTP catabolic process"/>
    <property type="evidence" value="ECO:0007669"/>
    <property type="project" value="TreeGrafter"/>
</dbReference>
<dbReference type="CDD" id="cd00077">
    <property type="entry name" value="HDc"/>
    <property type="match status" value="1"/>
</dbReference>
<dbReference type="Gene3D" id="1.10.3210.10">
    <property type="entry name" value="Hypothetical protein af1432"/>
    <property type="match status" value="1"/>
</dbReference>
<dbReference type="InterPro" id="IPR050135">
    <property type="entry name" value="dGTPase-like"/>
</dbReference>
<dbReference type="InterPro" id="IPR003607">
    <property type="entry name" value="HD/PDEase_dom"/>
</dbReference>
<dbReference type="InterPro" id="IPR006674">
    <property type="entry name" value="HD_domain"/>
</dbReference>
<dbReference type="PANTHER" id="PTHR11373">
    <property type="entry name" value="DEOXYNUCLEOSIDE TRIPHOSPHATE TRIPHOSPHOHYDROLASE"/>
    <property type="match status" value="1"/>
</dbReference>
<dbReference type="PANTHER" id="PTHR11373:SF4">
    <property type="entry name" value="DEOXYNUCLEOSIDE TRIPHOSPHATE TRIPHOSPHOHYDROLASE SAMHD1"/>
    <property type="match status" value="1"/>
</dbReference>
<dbReference type="Pfam" id="PF01966">
    <property type="entry name" value="HD"/>
    <property type="match status" value="1"/>
</dbReference>
<dbReference type="SMART" id="SM00471">
    <property type="entry name" value="HDc"/>
    <property type="match status" value="1"/>
</dbReference>
<dbReference type="SUPFAM" id="SSF109604">
    <property type="entry name" value="HD-domain/PDEase-like"/>
    <property type="match status" value="1"/>
</dbReference>
<dbReference type="PROSITE" id="PS51831">
    <property type="entry name" value="HD"/>
    <property type="match status" value="1"/>
</dbReference>
<organism>
    <name type="scientific">Mycoplasma pneumoniae (strain ATCC 29342 / M129 / Subtype 1)</name>
    <name type="common">Mycoplasmoides pneumoniae</name>
    <dbReference type="NCBI Taxonomy" id="272634"/>
    <lineage>
        <taxon>Bacteria</taxon>
        <taxon>Bacillati</taxon>
        <taxon>Mycoplasmatota</taxon>
        <taxon>Mycoplasmoidales</taxon>
        <taxon>Mycoplasmoidaceae</taxon>
        <taxon>Mycoplasmoides</taxon>
    </lineage>
</organism>
<protein>
    <recommendedName>
        <fullName>Uncharacterized protein MG461 homolog</fullName>
    </recommendedName>
</protein>
<proteinExistence type="predicted"/>
<sequence>MQQIFFKDPILGEVLFDQQTKWMYELVETEAFRRLRNIKQLGINFHFYPGGVHTRYSHSLGVYELLRRILNTPAFAPIDENKKQTVLVAGLLHDIGHAPHSHAFEIYFAKAPNFKKELFIHEEVTTLFVNSEPIKSILKANQIDPKLVAALIDENKELKPSNYWMRQLISSDLDADRMDYLLRDSYFTGTSHSLIDYQTIIKEMDCVKVKGIYEIFFKDKCLPLIENFLITRHHMYQSIYSDGRSISTELNLWFVFQRIKDLVDKNQFDFNGYKTLEQVCLPLLKNEHFDKKMLPAFVKLDDYVFQSFFVNLYQTTKDKILKKLLDSYLNSLKFEIKFYETKEQRDLDFEKQASKYKDAKYFITKFNNQFKGFYEGWSSHKNELKIKTMQNKHTNLSEISMLVKRSNELFFENALYKWANVFYRL</sequence>
<keyword id="KW-1185">Reference proteome</keyword>